<name>DAPE_EHRRG</name>
<evidence type="ECO:0000255" key="1">
    <source>
        <dbReference type="HAMAP-Rule" id="MF_01690"/>
    </source>
</evidence>
<gene>
    <name evidence="1" type="primary">dapE</name>
    <name type="ordered locus">ERGA_CDS_00870</name>
</gene>
<sequence>MVIDPVTLSQELISFPSITPTDNGAISFLSDILSQYGFTCHILDFGDDTVTVRNLYAYRGTEEGPNLCFAGHTDVVKTGDLTKWKFDPFSGHIEDDILYGRGAVDMKSAICAFIAAVSRINFNEVPGSISFLISGDEEGDHFQYGTPSVLKWLNENNHKIDYCIIGEPTSKSFLGDTIKVGRRGSVHFKIICNGIQGHVAYPHFAENPIDNMVSILYKICNTTFDTGNEYFQPSNCEIVSVDTGNTSRNVIPDTIVAHINIRYNNIHTAESLFDIINNICAQVTPKYQLLHSVSGEPFFNQPNQYSDMLSSAIKKVTGQDAIASTSGGVSDSRFIKNVCPVIEFGLKNETAHKIDEHVPVKEIYQLADIYTEFIKQFFNLSTT</sequence>
<reference key="1">
    <citation type="journal article" date="2006" name="J. Bacteriol.">
        <title>Comparative genomic analysis of three strains of Ehrlichia ruminantium reveals an active process of genome size plasticity.</title>
        <authorList>
            <person name="Frutos R."/>
            <person name="Viari A."/>
            <person name="Ferraz C."/>
            <person name="Morgat A."/>
            <person name="Eychenie S."/>
            <person name="Kandassamy Y."/>
            <person name="Chantal I."/>
            <person name="Bensaid A."/>
            <person name="Coissac E."/>
            <person name="Vachiery N."/>
            <person name="Demaille J."/>
            <person name="Martinez D."/>
        </authorList>
    </citation>
    <scope>NUCLEOTIDE SEQUENCE [LARGE SCALE GENOMIC DNA]</scope>
    <source>
        <strain>Gardel</strain>
    </source>
</reference>
<keyword id="KW-0028">Amino-acid biosynthesis</keyword>
<keyword id="KW-0170">Cobalt</keyword>
<keyword id="KW-0220">Diaminopimelate biosynthesis</keyword>
<keyword id="KW-0378">Hydrolase</keyword>
<keyword id="KW-0457">Lysine biosynthesis</keyword>
<keyword id="KW-0479">Metal-binding</keyword>
<keyword id="KW-0862">Zinc</keyword>
<dbReference type="EC" id="3.5.1.18" evidence="1"/>
<dbReference type="EMBL" id="CR925677">
    <property type="protein sequence ID" value="CAI27539.1"/>
    <property type="molecule type" value="Genomic_DNA"/>
</dbReference>
<dbReference type="RefSeq" id="WP_011255284.1">
    <property type="nucleotide sequence ID" value="NC_006831.1"/>
</dbReference>
<dbReference type="SMR" id="Q5FFA0"/>
<dbReference type="KEGG" id="erg:ERGA_CDS_00870"/>
<dbReference type="HOGENOM" id="CLU_021802_4_0_5"/>
<dbReference type="OrthoDB" id="9809784at2"/>
<dbReference type="UniPathway" id="UPA00034">
    <property type="reaction ID" value="UER00021"/>
</dbReference>
<dbReference type="Proteomes" id="UP000000533">
    <property type="component" value="Chromosome"/>
</dbReference>
<dbReference type="GO" id="GO:0008777">
    <property type="term" value="F:acetylornithine deacetylase activity"/>
    <property type="evidence" value="ECO:0007669"/>
    <property type="project" value="TreeGrafter"/>
</dbReference>
<dbReference type="GO" id="GO:0050897">
    <property type="term" value="F:cobalt ion binding"/>
    <property type="evidence" value="ECO:0007669"/>
    <property type="project" value="UniProtKB-UniRule"/>
</dbReference>
<dbReference type="GO" id="GO:0009014">
    <property type="term" value="F:succinyl-diaminopimelate desuccinylase activity"/>
    <property type="evidence" value="ECO:0007669"/>
    <property type="project" value="UniProtKB-UniRule"/>
</dbReference>
<dbReference type="GO" id="GO:0008270">
    <property type="term" value="F:zinc ion binding"/>
    <property type="evidence" value="ECO:0007669"/>
    <property type="project" value="UniProtKB-UniRule"/>
</dbReference>
<dbReference type="GO" id="GO:0019877">
    <property type="term" value="P:diaminopimelate biosynthetic process"/>
    <property type="evidence" value="ECO:0007669"/>
    <property type="project" value="UniProtKB-UniRule"/>
</dbReference>
<dbReference type="GO" id="GO:0006526">
    <property type="term" value="P:L-arginine biosynthetic process"/>
    <property type="evidence" value="ECO:0007669"/>
    <property type="project" value="TreeGrafter"/>
</dbReference>
<dbReference type="GO" id="GO:0009089">
    <property type="term" value="P:lysine biosynthetic process via diaminopimelate"/>
    <property type="evidence" value="ECO:0007669"/>
    <property type="project" value="UniProtKB-UniRule"/>
</dbReference>
<dbReference type="CDD" id="cd03891">
    <property type="entry name" value="M20_DapE_proteobac"/>
    <property type="match status" value="1"/>
</dbReference>
<dbReference type="Gene3D" id="3.30.70.360">
    <property type="match status" value="1"/>
</dbReference>
<dbReference type="Gene3D" id="3.40.630.10">
    <property type="entry name" value="Zn peptidases"/>
    <property type="match status" value="2"/>
</dbReference>
<dbReference type="HAMAP" id="MF_01690">
    <property type="entry name" value="DapE"/>
    <property type="match status" value="1"/>
</dbReference>
<dbReference type="InterPro" id="IPR001261">
    <property type="entry name" value="ArgE/DapE_CS"/>
</dbReference>
<dbReference type="InterPro" id="IPR036264">
    <property type="entry name" value="Bact_exopeptidase_dim_dom"/>
</dbReference>
<dbReference type="InterPro" id="IPR005941">
    <property type="entry name" value="DapE_proteobac"/>
</dbReference>
<dbReference type="InterPro" id="IPR002933">
    <property type="entry name" value="Peptidase_M20"/>
</dbReference>
<dbReference type="InterPro" id="IPR011650">
    <property type="entry name" value="Peptidase_M20_dimer"/>
</dbReference>
<dbReference type="InterPro" id="IPR050072">
    <property type="entry name" value="Peptidase_M20A"/>
</dbReference>
<dbReference type="NCBIfam" id="TIGR01246">
    <property type="entry name" value="dapE_proteo"/>
    <property type="match status" value="1"/>
</dbReference>
<dbReference type="NCBIfam" id="NF009557">
    <property type="entry name" value="PRK13009.1"/>
    <property type="match status" value="1"/>
</dbReference>
<dbReference type="PANTHER" id="PTHR43808">
    <property type="entry name" value="ACETYLORNITHINE DEACETYLASE"/>
    <property type="match status" value="1"/>
</dbReference>
<dbReference type="PANTHER" id="PTHR43808:SF31">
    <property type="entry name" value="N-ACETYL-L-CITRULLINE DEACETYLASE"/>
    <property type="match status" value="1"/>
</dbReference>
<dbReference type="Pfam" id="PF07687">
    <property type="entry name" value="M20_dimer"/>
    <property type="match status" value="1"/>
</dbReference>
<dbReference type="Pfam" id="PF01546">
    <property type="entry name" value="Peptidase_M20"/>
    <property type="match status" value="1"/>
</dbReference>
<dbReference type="SUPFAM" id="SSF55031">
    <property type="entry name" value="Bacterial exopeptidase dimerisation domain"/>
    <property type="match status" value="1"/>
</dbReference>
<dbReference type="SUPFAM" id="SSF53187">
    <property type="entry name" value="Zn-dependent exopeptidases"/>
    <property type="match status" value="1"/>
</dbReference>
<dbReference type="PROSITE" id="PS00759">
    <property type="entry name" value="ARGE_DAPE_CPG2_2"/>
    <property type="match status" value="1"/>
</dbReference>
<organism>
    <name type="scientific">Ehrlichia ruminantium (strain Gardel)</name>
    <dbReference type="NCBI Taxonomy" id="302409"/>
    <lineage>
        <taxon>Bacteria</taxon>
        <taxon>Pseudomonadati</taxon>
        <taxon>Pseudomonadota</taxon>
        <taxon>Alphaproteobacteria</taxon>
        <taxon>Rickettsiales</taxon>
        <taxon>Anaplasmataceae</taxon>
        <taxon>Ehrlichia</taxon>
    </lineage>
</organism>
<comment type="function">
    <text evidence="1">Catalyzes the hydrolysis of N-succinyl-L,L-diaminopimelic acid (SDAP), forming succinate and LL-2,6-diaminopimelate (DAP), an intermediate involved in the bacterial biosynthesis of lysine and meso-diaminopimelic acid, an essential component of bacterial cell walls.</text>
</comment>
<comment type="catalytic activity">
    <reaction evidence="1">
        <text>N-succinyl-(2S,6S)-2,6-diaminopimelate + H2O = (2S,6S)-2,6-diaminopimelate + succinate</text>
        <dbReference type="Rhea" id="RHEA:22608"/>
        <dbReference type="ChEBI" id="CHEBI:15377"/>
        <dbReference type="ChEBI" id="CHEBI:30031"/>
        <dbReference type="ChEBI" id="CHEBI:57609"/>
        <dbReference type="ChEBI" id="CHEBI:58087"/>
        <dbReference type="EC" id="3.5.1.18"/>
    </reaction>
</comment>
<comment type="cofactor">
    <cofactor evidence="1">
        <name>Zn(2+)</name>
        <dbReference type="ChEBI" id="CHEBI:29105"/>
    </cofactor>
    <cofactor evidence="1">
        <name>Co(2+)</name>
        <dbReference type="ChEBI" id="CHEBI:48828"/>
    </cofactor>
    <text evidence="1">Binds 2 Zn(2+) or Co(2+) ions per subunit.</text>
</comment>
<comment type="pathway">
    <text evidence="1">Amino-acid biosynthesis; L-lysine biosynthesis via DAP pathway; LL-2,6-diaminopimelate from (S)-tetrahydrodipicolinate (succinylase route): step 3/3.</text>
</comment>
<comment type="subunit">
    <text evidence="1">Homodimer.</text>
</comment>
<comment type="similarity">
    <text evidence="1">Belongs to the peptidase M20A family. DapE subfamily.</text>
</comment>
<accession>Q5FFA0</accession>
<protein>
    <recommendedName>
        <fullName evidence="1">Succinyl-diaminopimelate desuccinylase</fullName>
        <shortName evidence="1">SDAP desuccinylase</shortName>
        <ecNumber evidence="1">3.5.1.18</ecNumber>
    </recommendedName>
    <alternativeName>
        <fullName evidence="1">N-succinyl-LL-2,6-diaminoheptanedioate amidohydrolase</fullName>
    </alternativeName>
</protein>
<proteinExistence type="inferred from homology"/>
<feature type="chain" id="PRO_0000375546" description="Succinyl-diaminopimelate desuccinylase">
    <location>
        <begin position="1"/>
        <end position="383"/>
    </location>
</feature>
<feature type="active site" evidence="1">
    <location>
        <position position="74"/>
    </location>
</feature>
<feature type="active site" description="Proton acceptor" evidence="1">
    <location>
        <position position="137"/>
    </location>
</feature>
<feature type="binding site" evidence="1">
    <location>
        <position position="72"/>
    </location>
    <ligand>
        <name>Zn(2+)</name>
        <dbReference type="ChEBI" id="CHEBI:29105"/>
        <label>1</label>
    </ligand>
</feature>
<feature type="binding site" evidence="1">
    <location>
        <position position="105"/>
    </location>
    <ligand>
        <name>Zn(2+)</name>
        <dbReference type="ChEBI" id="CHEBI:29105"/>
        <label>1</label>
    </ligand>
</feature>
<feature type="binding site" evidence="1">
    <location>
        <position position="105"/>
    </location>
    <ligand>
        <name>Zn(2+)</name>
        <dbReference type="ChEBI" id="CHEBI:29105"/>
        <label>2</label>
    </ligand>
</feature>
<feature type="binding site" evidence="1">
    <location>
        <position position="138"/>
    </location>
    <ligand>
        <name>Zn(2+)</name>
        <dbReference type="ChEBI" id="CHEBI:29105"/>
        <label>2</label>
    </ligand>
</feature>
<feature type="binding site" evidence="1">
    <location>
        <position position="167"/>
    </location>
    <ligand>
        <name>Zn(2+)</name>
        <dbReference type="ChEBI" id="CHEBI:29105"/>
        <label>1</label>
    </ligand>
</feature>
<feature type="binding site" evidence="1">
    <location>
        <position position="352"/>
    </location>
    <ligand>
        <name>Zn(2+)</name>
        <dbReference type="ChEBI" id="CHEBI:29105"/>
        <label>2</label>
    </ligand>
</feature>